<reference key="1">
    <citation type="journal article" date="1994" name="Virology">
        <title>Isolation, cloning, and sequencing of simian foamy viruses from chimpanzees (SFVcpz): high homology to human foamy virus (HFV).</title>
        <authorList>
            <person name="Herchenroder O."/>
            <person name="Renne R."/>
            <person name="Loncar D."/>
            <person name="Cobb E.K."/>
            <person name="Murthy K.K."/>
            <person name="Schneider J."/>
            <person name="Mergia A."/>
            <person name="Luciw P.A."/>
        </authorList>
    </citation>
    <scope>NUCLEOTIDE SEQUENCE [GENOMIC DNA]</scope>
</reference>
<sequence length="490" mass="56208">MDSYQEEEPVASTSGLQDLQTLSELVGPENAGEGDLVIAEEPEENPRRPRRYTKRDVKCVSYHAYKELEDKHPHHIKLQDWIPKPEEMVAQKVQNQDVGTILSFDVTCLKSITSLGRNDPGNDPSIMSHVLPVVTPWPMSQDHYAPTLFGLLDRYYKGYLENPATFQTWKFTCQEDPSGKRYMGTQFWVPPLGQVNIQFYKNYQIVTCCQALDPFANIFHGTEEEMYDIDSGPDVWCTPSLCFKVIYEGAIGQKQEQKSWLCRLGYGHRMGANDYRRVDLYAMKQGKKNPYGDKGDAALQYAYQVKRGCKAGCLASPVLNFKALQFHRTLMADLTNPKIGQGYLAHGYHAAMEAYGPQRGSSEERVWWNATRNQGKKDEYYREGGEEPHYPNTPAPHKKTWEERHKVLKLSPFATPSDIQRWTTRALPYGWKVIDGNGDDYTSRRNIRTLTEMTQEEIRKRWERGYCDPFIDSGSDSDGPLSKPQTVKVW</sequence>
<keyword id="KW-0025">Alternative splicing</keyword>
<keyword id="KW-1035">Host cytoplasm</keyword>
<keyword id="KW-1048">Host nucleus</keyword>
<keyword id="KW-0945">Host-virus interaction</keyword>
<keyword id="KW-1185">Reference proteome</keyword>
<keyword id="KW-0964">Secreted</keyword>
<organismHost>
    <name type="scientific">Pan troglodytes</name>
    <name type="common">Chimpanzee</name>
    <dbReference type="NCBI Taxonomy" id="9598"/>
</organismHost>
<proteinExistence type="inferred from homology"/>
<comment type="function">
    <text evidence="1">Bet counteracts the innate antiretroviral activity of APOBEC3 family defense factors by inhibiting their incorporation into virions. May be implicated in the establishment and/or maintenance of viral persistance. Bet is required for viral replication (By similarity).</text>
</comment>
<comment type="subunit">
    <text evidence="1">Bet interacts with host APOBEC3C; this interaction does not induce APOBEC3C degradation, but prevents dimerization and incorporation into virion of the latter.</text>
</comment>
<comment type="subcellular location">
    <molecule>Isoform Bet</molecule>
    <subcellularLocation>
        <location evidence="2">Host cytoplasm</location>
    </subcellularLocation>
    <subcellularLocation>
        <location evidence="2">Host nucleus</location>
    </subcellularLocation>
    <subcellularLocation>
        <location evidence="2">Secreted</location>
    </subcellularLocation>
    <text evidence="2">Bet is highly expressed in infected cells, where it localizes to both cytoplasm and nucleus. Also secreted and internalized by non-infected surrounding cells.</text>
</comment>
<comment type="subcellular location">
    <molecule>Isoform Bel-2</molecule>
    <subcellularLocation>
        <location evidence="2">Host nucleus</location>
    </subcellularLocation>
</comment>
<comment type="alternative products">
    <event type="alternative splicing"/>
    <isoform>
        <id>Q87043-1</id>
        <name>Bet</name>
        <sequence type="displayed"/>
    </isoform>
    <isoform>
        <id>Q87042-1</id>
        <name>Bel-1</name>
        <name>Bel1</name>
        <sequence type="external"/>
    </isoform>
    <isoform>
        <id>Q87043-2</id>
        <name>Bel-2</name>
        <name>Bel2</name>
        <sequence type="described" ref="VSP_037602"/>
    </isoform>
    <text>The first 88 residues are shared by isoform Bel-1 and isoform Bet.</text>
</comment>
<comment type="sequence caution" evidence="4">
    <conflict type="erroneous gene model prediction">
        <sequence resource="EMBL-CDS" id="AAA19981"/>
    </conflict>
</comment>
<accession>Q87043</accession>
<name>BET_SFVCP</name>
<feature type="chain" id="PRO_0000378599" description="Protein Bet">
    <location>
        <begin position="1"/>
        <end position="490"/>
    </location>
</feature>
<feature type="region of interest" description="Disordered" evidence="3">
    <location>
        <begin position="1"/>
        <end position="20"/>
    </location>
</feature>
<feature type="region of interest" description="Disordered" evidence="3">
    <location>
        <begin position="25"/>
        <end position="52"/>
    </location>
</feature>
<feature type="region of interest" description="Disordered" evidence="3">
    <location>
        <begin position="471"/>
        <end position="490"/>
    </location>
</feature>
<feature type="compositionally biased region" description="Polar residues" evidence="3">
    <location>
        <begin position="11"/>
        <end position="20"/>
    </location>
</feature>
<feature type="splice variant" id="VSP_037602" description="In isoform Bel-2." evidence="4">
    <location>
        <begin position="1"/>
        <end position="126"/>
    </location>
</feature>
<gene>
    <name type="primary">bet</name>
</gene>
<organism>
    <name type="scientific">Simian foamy virus (isolate chimpanzee)</name>
    <name type="common">SFVcpz</name>
    <dbReference type="NCBI Taxonomy" id="298339"/>
    <lineage>
        <taxon>Viruses</taxon>
        <taxon>Riboviria</taxon>
        <taxon>Pararnavirae</taxon>
        <taxon>Artverviricota</taxon>
        <taxon>Revtraviricetes</taxon>
        <taxon>Ortervirales</taxon>
        <taxon>Retroviridae</taxon>
        <taxon>Spumaretrovirinae</taxon>
        <taxon>Spumavirus</taxon>
        <taxon>Simian foamy virus</taxon>
    </lineage>
</organism>
<dbReference type="EMBL" id="U04327">
    <property type="protein sequence ID" value="AAA19981.1"/>
    <property type="status" value="ALT_SEQ"/>
    <property type="molecule type" value="Genomic_DNA"/>
</dbReference>
<dbReference type="SMR" id="Q87043"/>
<dbReference type="KEGG" id="vg:1724694"/>
<dbReference type="Proteomes" id="UP000001063">
    <property type="component" value="Segment"/>
</dbReference>
<dbReference type="GO" id="GO:0005576">
    <property type="term" value="C:extracellular region"/>
    <property type="evidence" value="ECO:0007669"/>
    <property type="project" value="UniProtKB-SubCell"/>
</dbReference>
<dbReference type="GO" id="GO:0030430">
    <property type="term" value="C:host cell cytoplasm"/>
    <property type="evidence" value="ECO:0007669"/>
    <property type="project" value="UniProtKB-SubCell"/>
</dbReference>
<dbReference type="GO" id="GO:0042025">
    <property type="term" value="C:host cell nucleus"/>
    <property type="evidence" value="ECO:0007669"/>
    <property type="project" value="UniProtKB-SubCell"/>
</dbReference>
<dbReference type="GO" id="GO:0045893">
    <property type="term" value="P:positive regulation of DNA-templated transcription"/>
    <property type="evidence" value="ECO:0007669"/>
    <property type="project" value="InterPro"/>
</dbReference>
<dbReference type="GO" id="GO:0016032">
    <property type="term" value="P:viral process"/>
    <property type="evidence" value="ECO:0007669"/>
    <property type="project" value="InterPro"/>
</dbReference>
<dbReference type="InterPro" id="IPR004956">
    <property type="entry name" value="Foamy_BEL"/>
</dbReference>
<dbReference type="Pfam" id="PF03274">
    <property type="entry name" value="Foamy_BEL"/>
    <property type="match status" value="1"/>
</dbReference>
<evidence type="ECO:0000250" key="1"/>
<evidence type="ECO:0000250" key="2">
    <source>
        <dbReference type="UniProtKB" id="P89873"/>
    </source>
</evidence>
<evidence type="ECO:0000256" key="3">
    <source>
        <dbReference type="SAM" id="MobiDB-lite"/>
    </source>
</evidence>
<evidence type="ECO:0000305" key="4"/>
<protein>
    <recommendedName>
        <fullName>Protein Bet</fullName>
    </recommendedName>
</protein>